<evidence type="ECO:0000250" key="1">
    <source>
        <dbReference type="UniProtKB" id="A0A499UB99"/>
    </source>
</evidence>
<evidence type="ECO:0000250" key="2">
    <source>
        <dbReference type="UniProtKB" id="C4R4G9"/>
    </source>
</evidence>
<evidence type="ECO:0000250" key="3">
    <source>
        <dbReference type="UniProtKB" id="P80324"/>
    </source>
</evidence>
<evidence type="ECO:0000250" key="4">
    <source>
        <dbReference type="UniProtKB" id="Q99042"/>
    </source>
</evidence>
<evidence type="ECO:0000250" key="5">
    <source>
        <dbReference type="UniProtKB" id="Q9HGY3"/>
    </source>
</evidence>
<evidence type="ECO:0000269" key="6">
    <source>
    </source>
</evidence>
<evidence type="ECO:0000269" key="7">
    <source>
    </source>
</evidence>
<evidence type="ECO:0000305" key="8"/>
<evidence type="ECO:0000312" key="9">
    <source>
        <dbReference type="PomBase" id="SPCC1450.07c"/>
    </source>
</evidence>
<accession>Q9Y7N4</accession>
<dbReference type="EC" id="1.4.3.3" evidence="6 7"/>
<dbReference type="EMBL" id="CU329672">
    <property type="protein sequence ID" value="CAB40174.1"/>
    <property type="molecule type" value="Genomic_DNA"/>
</dbReference>
<dbReference type="PIR" id="T40989">
    <property type="entry name" value="T40989"/>
</dbReference>
<dbReference type="RefSeq" id="NP_588306.1">
    <property type="nucleotide sequence ID" value="NM_001023296.2"/>
</dbReference>
<dbReference type="SMR" id="Q9Y7N4"/>
<dbReference type="BioGRID" id="275606">
    <property type="interactions" value="11"/>
</dbReference>
<dbReference type="FunCoup" id="Q9Y7N4">
    <property type="interactions" value="73"/>
</dbReference>
<dbReference type="STRING" id="4896.SPCC1450.07c.1"/>
<dbReference type="PaxDb" id="4896-SPCC1450.07c.1"/>
<dbReference type="EnsemblFungi" id="SPCC1450.07c.1">
    <property type="protein sequence ID" value="SPCC1450.07c.1:pep"/>
    <property type="gene ID" value="SPCC1450.07c"/>
</dbReference>
<dbReference type="PomBase" id="SPCC1450.07c">
    <property type="gene designation" value="dao1"/>
</dbReference>
<dbReference type="VEuPathDB" id="FungiDB:SPCC1450.07c"/>
<dbReference type="eggNOG" id="KOG3923">
    <property type="taxonomic scope" value="Eukaryota"/>
</dbReference>
<dbReference type="HOGENOM" id="CLU_034311_1_0_1"/>
<dbReference type="InParanoid" id="Q9Y7N4"/>
<dbReference type="OMA" id="DEKCYPT"/>
<dbReference type="PhylomeDB" id="Q9Y7N4"/>
<dbReference type="Reactome" id="R-SPO-389661">
    <property type="pathway name" value="Glyoxylate metabolism and glycine degradation"/>
</dbReference>
<dbReference type="Reactome" id="R-SPO-9033241">
    <property type="pathway name" value="Peroxisomal protein import"/>
</dbReference>
<dbReference type="PRO" id="PR:Q9Y7N4"/>
<dbReference type="Proteomes" id="UP000002485">
    <property type="component" value="Chromosome III"/>
</dbReference>
<dbReference type="GO" id="GO:0005737">
    <property type="term" value="C:cytoplasm"/>
    <property type="evidence" value="ECO:0000318"/>
    <property type="project" value="GO_Central"/>
</dbReference>
<dbReference type="GO" id="GO:0005782">
    <property type="term" value="C:peroxisomal matrix"/>
    <property type="evidence" value="ECO:0000250"/>
    <property type="project" value="UniProtKB"/>
</dbReference>
<dbReference type="GO" id="GO:0005777">
    <property type="term" value="C:peroxisome"/>
    <property type="evidence" value="ECO:0000250"/>
    <property type="project" value="UniProtKB"/>
</dbReference>
<dbReference type="GO" id="GO:0003884">
    <property type="term" value="F:D-amino-acid oxidase activity"/>
    <property type="evidence" value="ECO:0000314"/>
    <property type="project" value="PomBase"/>
</dbReference>
<dbReference type="GO" id="GO:0071949">
    <property type="term" value="F:FAD binding"/>
    <property type="evidence" value="ECO:0007669"/>
    <property type="project" value="InterPro"/>
</dbReference>
<dbReference type="GO" id="GO:0043799">
    <property type="term" value="F:glycine oxidase activity"/>
    <property type="evidence" value="ECO:0007669"/>
    <property type="project" value="RHEA"/>
</dbReference>
<dbReference type="GO" id="GO:0046436">
    <property type="term" value="P:D-alanine metabolic process"/>
    <property type="evidence" value="ECO:0000314"/>
    <property type="project" value="PomBase"/>
</dbReference>
<dbReference type="GO" id="GO:0019478">
    <property type="term" value="P:D-amino acid catabolic process"/>
    <property type="evidence" value="ECO:0000318"/>
    <property type="project" value="GO_Central"/>
</dbReference>
<dbReference type="GO" id="GO:0046416">
    <property type="term" value="P:D-amino acid metabolic process"/>
    <property type="evidence" value="ECO:0000314"/>
    <property type="project" value="PomBase"/>
</dbReference>
<dbReference type="GO" id="GO:1902114">
    <property type="term" value="P:D-valine metabolic process"/>
    <property type="evidence" value="ECO:0000315"/>
    <property type="project" value="PomBase"/>
</dbReference>
<dbReference type="GO" id="GO:0019740">
    <property type="term" value="P:nitrogen utilization"/>
    <property type="evidence" value="ECO:0000250"/>
    <property type="project" value="UniProtKB"/>
</dbReference>
<dbReference type="Gene3D" id="3.30.9.10">
    <property type="entry name" value="D-Amino Acid Oxidase, subunit A, domain 2"/>
    <property type="match status" value="1"/>
</dbReference>
<dbReference type="Gene3D" id="3.40.50.720">
    <property type="entry name" value="NAD(P)-binding Rossmann-like Domain"/>
    <property type="match status" value="1"/>
</dbReference>
<dbReference type="InterPro" id="IPR023209">
    <property type="entry name" value="DAO"/>
</dbReference>
<dbReference type="InterPro" id="IPR006076">
    <property type="entry name" value="FAD-dep_OxRdtase"/>
</dbReference>
<dbReference type="PANTHER" id="PTHR11530">
    <property type="entry name" value="D-AMINO ACID OXIDASE"/>
    <property type="match status" value="1"/>
</dbReference>
<dbReference type="PANTHER" id="PTHR11530:SF11">
    <property type="entry name" value="D-ASPARTATE OXIDASE"/>
    <property type="match status" value="1"/>
</dbReference>
<dbReference type="Pfam" id="PF01266">
    <property type="entry name" value="DAO"/>
    <property type="match status" value="1"/>
</dbReference>
<dbReference type="PIRSF" id="PIRSF000189">
    <property type="entry name" value="D-aa_oxidase"/>
    <property type="match status" value="1"/>
</dbReference>
<dbReference type="SUPFAM" id="SSF54373">
    <property type="entry name" value="FAD-linked reductases, C-terminal domain"/>
    <property type="match status" value="1"/>
</dbReference>
<dbReference type="SUPFAM" id="SSF51971">
    <property type="entry name" value="Nucleotide-binding domain"/>
    <property type="match status" value="1"/>
</dbReference>
<comment type="function">
    <text evidence="5 6 7">Catalyzes the oxidative deamination of D-amino acids with broad substrate specificity (PubMed:22986818, PubMed:23085840). Enables the organism to utilize D-amino acids as a source of nutrients (By similarity).</text>
</comment>
<comment type="catalytic activity">
    <reaction evidence="6 7">
        <text>a D-alpha-amino acid + O2 + H2O = a 2-oxocarboxylate + H2O2 + NH4(+)</text>
        <dbReference type="Rhea" id="RHEA:21816"/>
        <dbReference type="ChEBI" id="CHEBI:15377"/>
        <dbReference type="ChEBI" id="CHEBI:15379"/>
        <dbReference type="ChEBI" id="CHEBI:16240"/>
        <dbReference type="ChEBI" id="CHEBI:28938"/>
        <dbReference type="ChEBI" id="CHEBI:35179"/>
        <dbReference type="ChEBI" id="CHEBI:59871"/>
        <dbReference type="EC" id="1.4.3.3"/>
    </reaction>
    <physiologicalReaction direction="left-to-right" evidence="6 7">
        <dbReference type="Rhea" id="RHEA:21817"/>
    </physiologicalReaction>
</comment>
<comment type="catalytic activity">
    <reaction evidence="6">
        <text>D-serine + O2 + H2O = 3-hydroxypyruvate + H2O2 + NH4(+)</text>
        <dbReference type="Rhea" id="RHEA:70951"/>
        <dbReference type="ChEBI" id="CHEBI:15377"/>
        <dbReference type="ChEBI" id="CHEBI:15379"/>
        <dbReference type="ChEBI" id="CHEBI:16240"/>
        <dbReference type="ChEBI" id="CHEBI:17180"/>
        <dbReference type="ChEBI" id="CHEBI:28938"/>
        <dbReference type="ChEBI" id="CHEBI:35247"/>
    </reaction>
    <physiologicalReaction direction="left-to-right" evidence="6">
        <dbReference type="Rhea" id="RHEA:70952"/>
    </physiologicalReaction>
</comment>
<comment type="catalytic activity">
    <reaction evidence="6 7">
        <text>D-alanine + O2 + H2O = pyruvate + H2O2 + NH4(+)</text>
        <dbReference type="Rhea" id="RHEA:22688"/>
        <dbReference type="ChEBI" id="CHEBI:15361"/>
        <dbReference type="ChEBI" id="CHEBI:15377"/>
        <dbReference type="ChEBI" id="CHEBI:15379"/>
        <dbReference type="ChEBI" id="CHEBI:16240"/>
        <dbReference type="ChEBI" id="CHEBI:28938"/>
        <dbReference type="ChEBI" id="CHEBI:57416"/>
    </reaction>
    <physiologicalReaction direction="left-to-right" evidence="6 7">
        <dbReference type="Rhea" id="RHEA:22689"/>
    </physiologicalReaction>
</comment>
<comment type="catalytic activity">
    <reaction evidence="6">
        <text>D-arginine + O2 + H2O = 5-guanidino-2-oxopentanoate + H2O2 + NH4(+)</text>
        <dbReference type="Rhea" id="RHEA:78219"/>
        <dbReference type="ChEBI" id="CHEBI:15377"/>
        <dbReference type="ChEBI" id="CHEBI:15379"/>
        <dbReference type="ChEBI" id="CHEBI:16240"/>
        <dbReference type="ChEBI" id="CHEBI:28938"/>
        <dbReference type="ChEBI" id="CHEBI:32689"/>
        <dbReference type="ChEBI" id="CHEBI:58489"/>
    </reaction>
    <physiologicalReaction direction="left-to-right" evidence="6">
        <dbReference type="Rhea" id="RHEA:78220"/>
    </physiologicalReaction>
</comment>
<comment type="cofactor">
    <cofactor evidence="4">
        <name>FAD</name>
        <dbReference type="ChEBI" id="CHEBI:57692"/>
    </cofactor>
</comment>
<comment type="subcellular location">
    <subcellularLocation>
        <location evidence="2">Peroxisome</location>
    </subcellularLocation>
</comment>
<comment type="similarity">
    <text evidence="8">Belongs to the DAMOX/DASOX family.</text>
</comment>
<gene>
    <name evidence="9" type="primary">dao1</name>
    <name evidence="9" type="ORF">SPCC1450.07c</name>
</gene>
<name>OXDA_SCHPO</name>
<protein>
    <recommendedName>
        <fullName>D-amino-acid oxidase</fullName>
        <shortName>DAAO</shortName>
        <shortName>DAMOX</shortName>
        <shortName>DAO</shortName>
        <ecNumber evidence="6 7">1.4.3.3</ecNumber>
    </recommendedName>
</protein>
<sequence length="348" mass="38714">MTKENKPRDIVIVGAGVIGLTTAWILSDLGLAPRIKVIAKYTPEDRSVEYTSPWAGANFCSISATDDNALRWDKITYHRFAYLAKTRPEAGIRFADLRELWEYEPKHDKIRSWNTYVRDFKVIPEKDLPGECIYGHKATTFLINAPHYLNYMYKLLIEAGVEFEKKELSHIKETVEETPEASVVFNCTGLWASKLGGVEDPDVYPTRGHVVLVKAPHVTETRILNGKNSDTYIIPRPLNGGVICGGFMQPGNWDREIHPEDTLDILKRTSALMPELFHGKGPEGAEIIQECVGFRPSRKGGARVELDVVPGTSVPLVHDYGASGTGYQAGYGMALDSVMLALPKIKLA</sequence>
<reference key="1">
    <citation type="journal article" date="2002" name="Nature">
        <title>The genome sequence of Schizosaccharomyces pombe.</title>
        <authorList>
            <person name="Wood V."/>
            <person name="Gwilliam R."/>
            <person name="Rajandream M.A."/>
            <person name="Lyne M.H."/>
            <person name="Lyne R."/>
            <person name="Stewart A."/>
            <person name="Sgouros J.G."/>
            <person name="Peat N."/>
            <person name="Hayles J."/>
            <person name="Baker S.G."/>
            <person name="Basham D."/>
            <person name="Bowman S."/>
            <person name="Brooks K."/>
            <person name="Brown D."/>
            <person name="Brown S."/>
            <person name="Chillingworth T."/>
            <person name="Churcher C.M."/>
            <person name="Collins M."/>
            <person name="Connor R."/>
            <person name="Cronin A."/>
            <person name="Davis P."/>
            <person name="Feltwell T."/>
            <person name="Fraser A."/>
            <person name="Gentles S."/>
            <person name="Goble A."/>
            <person name="Hamlin N."/>
            <person name="Harris D.E."/>
            <person name="Hidalgo J."/>
            <person name="Hodgson G."/>
            <person name="Holroyd S."/>
            <person name="Hornsby T."/>
            <person name="Howarth S."/>
            <person name="Huckle E.J."/>
            <person name="Hunt S."/>
            <person name="Jagels K."/>
            <person name="James K.D."/>
            <person name="Jones L."/>
            <person name="Jones M."/>
            <person name="Leather S."/>
            <person name="McDonald S."/>
            <person name="McLean J."/>
            <person name="Mooney P."/>
            <person name="Moule S."/>
            <person name="Mungall K.L."/>
            <person name="Murphy L.D."/>
            <person name="Niblett D."/>
            <person name="Odell C."/>
            <person name="Oliver K."/>
            <person name="O'Neil S."/>
            <person name="Pearson D."/>
            <person name="Quail M.A."/>
            <person name="Rabbinowitsch E."/>
            <person name="Rutherford K.M."/>
            <person name="Rutter S."/>
            <person name="Saunders D."/>
            <person name="Seeger K."/>
            <person name="Sharp S."/>
            <person name="Skelton J."/>
            <person name="Simmonds M.N."/>
            <person name="Squares R."/>
            <person name="Squares S."/>
            <person name="Stevens K."/>
            <person name="Taylor K."/>
            <person name="Taylor R.G."/>
            <person name="Tivey A."/>
            <person name="Walsh S.V."/>
            <person name="Warren T."/>
            <person name="Whitehead S."/>
            <person name="Woodward J.R."/>
            <person name="Volckaert G."/>
            <person name="Aert R."/>
            <person name="Robben J."/>
            <person name="Grymonprez B."/>
            <person name="Weltjens I."/>
            <person name="Vanstreels E."/>
            <person name="Rieger M."/>
            <person name="Schaefer M."/>
            <person name="Mueller-Auer S."/>
            <person name="Gabel C."/>
            <person name="Fuchs M."/>
            <person name="Duesterhoeft A."/>
            <person name="Fritzc C."/>
            <person name="Holzer E."/>
            <person name="Moestl D."/>
            <person name="Hilbert H."/>
            <person name="Borzym K."/>
            <person name="Langer I."/>
            <person name="Beck A."/>
            <person name="Lehrach H."/>
            <person name="Reinhardt R."/>
            <person name="Pohl T.M."/>
            <person name="Eger P."/>
            <person name="Zimmermann W."/>
            <person name="Wedler H."/>
            <person name="Wambutt R."/>
            <person name="Purnelle B."/>
            <person name="Goffeau A."/>
            <person name="Cadieu E."/>
            <person name="Dreano S."/>
            <person name="Gloux S."/>
            <person name="Lelaure V."/>
            <person name="Mottier S."/>
            <person name="Galibert F."/>
            <person name="Aves S.J."/>
            <person name="Xiang Z."/>
            <person name="Hunt C."/>
            <person name="Moore K."/>
            <person name="Hurst S.M."/>
            <person name="Lucas M."/>
            <person name="Rochet M."/>
            <person name="Gaillardin C."/>
            <person name="Tallada V.A."/>
            <person name="Garzon A."/>
            <person name="Thode G."/>
            <person name="Daga R.R."/>
            <person name="Cruzado L."/>
            <person name="Jimenez J."/>
            <person name="Sanchez M."/>
            <person name="del Rey F."/>
            <person name="Benito J."/>
            <person name="Dominguez A."/>
            <person name="Revuelta J.L."/>
            <person name="Moreno S."/>
            <person name="Armstrong J."/>
            <person name="Forsburg S.L."/>
            <person name="Cerutti L."/>
            <person name="Lowe T."/>
            <person name="McCombie W.R."/>
            <person name="Paulsen I."/>
            <person name="Potashkin J."/>
            <person name="Shpakovski G.V."/>
            <person name="Ussery D."/>
            <person name="Barrell B.G."/>
            <person name="Nurse P."/>
        </authorList>
    </citation>
    <scope>NUCLEOTIDE SEQUENCE [LARGE SCALE GENOMIC DNA]</scope>
    <source>
        <strain>972 / ATCC 24843</strain>
    </source>
</reference>
<reference key="2">
    <citation type="journal article" date="2012" name="Curr. Microbiol.">
        <title>D-amino acid-induced expression of D-amino acid oxidase in the yeast Schizosaccharomyces pombe.</title>
        <authorList>
            <person name="Takahashi S."/>
            <person name="Okada H."/>
            <person name="Abe K."/>
            <person name="Kera Y."/>
        </authorList>
    </citation>
    <scope>FUNCTION</scope>
    <scope>CATALYTIC ACTIVITY</scope>
</reference>
<reference key="3">
    <citation type="journal article" date="2012" name="Plant Physiol.">
        <title>Growth of transplastomic cells expressing D-amino acid oxidase in chloroplasts is tolerant to D-alanine and inhibited by D-valine.</title>
        <authorList>
            <person name="Gisby M.F."/>
            <person name="Mudd E.A."/>
            <person name="Day A."/>
        </authorList>
    </citation>
    <scope>FUNCTION</scope>
    <scope>CATALYTIC ACTIVITY</scope>
</reference>
<organism>
    <name type="scientific">Schizosaccharomyces pombe (strain 972 / ATCC 24843)</name>
    <name type="common">Fission yeast</name>
    <dbReference type="NCBI Taxonomy" id="284812"/>
    <lineage>
        <taxon>Eukaryota</taxon>
        <taxon>Fungi</taxon>
        <taxon>Dikarya</taxon>
        <taxon>Ascomycota</taxon>
        <taxon>Taphrinomycotina</taxon>
        <taxon>Schizosaccharomycetes</taxon>
        <taxon>Schizosaccharomycetales</taxon>
        <taxon>Schizosaccharomycetaceae</taxon>
        <taxon>Schizosaccharomyces</taxon>
    </lineage>
</organism>
<proteinExistence type="evidence at protein level"/>
<keyword id="KW-0274">FAD</keyword>
<keyword id="KW-0285">Flavoprotein</keyword>
<keyword id="KW-0560">Oxidoreductase</keyword>
<keyword id="KW-0576">Peroxisome</keyword>
<keyword id="KW-1185">Reference proteome</keyword>
<feature type="chain" id="PRO_0000315956" description="D-amino-acid oxidase">
    <location>
        <begin position="1"/>
        <end position="348"/>
    </location>
</feature>
<feature type="binding site" evidence="1">
    <location>
        <position position="15"/>
    </location>
    <ligand>
        <name>FAD</name>
        <dbReference type="ChEBI" id="CHEBI:57692"/>
    </ligand>
</feature>
<feature type="binding site" evidence="3">
    <location>
        <position position="18"/>
    </location>
    <ligand>
        <name>FAD</name>
        <dbReference type="ChEBI" id="CHEBI:57692"/>
    </ligand>
</feature>
<feature type="binding site" evidence="3">
    <location>
        <position position="40"/>
    </location>
    <ligand>
        <name>FAD</name>
        <dbReference type="ChEBI" id="CHEBI:57692"/>
    </ligand>
</feature>
<feature type="binding site" evidence="3">
    <location>
        <position position="52"/>
    </location>
    <ligand>
        <name>FAD</name>
        <dbReference type="ChEBI" id="CHEBI:57692"/>
    </ligand>
</feature>
<feature type="binding site" evidence="3">
    <location>
        <position position="56"/>
    </location>
    <ligand>
        <name>FAD</name>
        <dbReference type="ChEBI" id="CHEBI:57692"/>
    </ligand>
</feature>
<feature type="binding site" evidence="3">
    <location>
        <position position="58"/>
    </location>
    <ligand>
        <name>FAD</name>
        <dbReference type="ChEBI" id="CHEBI:57692"/>
    </ligand>
</feature>
<feature type="binding site" evidence="3">
    <location>
        <position position="232"/>
    </location>
    <ligand>
        <name>(R)-lactate</name>
        <dbReference type="ChEBI" id="CHEBI:16004"/>
    </ligand>
</feature>
<feature type="binding site" evidence="3">
    <location>
        <position position="232"/>
    </location>
    <ligand>
        <name>anthranilate</name>
        <dbReference type="ChEBI" id="CHEBI:16567"/>
        <label>1</label>
    </ligand>
</feature>
<feature type="binding site" evidence="3">
    <location>
        <position position="295"/>
    </location>
    <ligand>
        <name>(R)-lactate</name>
        <dbReference type="ChEBI" id="CHEBI:16004"/>
    </ligand>
</feature>
<feature type="binding site" evidence="3">
    <location>
        <position position="295"/>
    </location>
    <ligand>
        <name>anthranilate</name>
        <dbReference type="ChEBI" id="CHEBI:16567"/>
        <label>1</label>
    </ligand>
</feature>
<feature type="binding site" evidence="3">
    <location>
        <position position="295"/>
    </location>
    <ligand>
        <name>FAD</name>
        <dbReference type="ChEBI" id="CHEBI:57692"/>
    </ligand>
</feature>
<feature type="binding site" evidence="3">
    <location>
        <position position="323"/>
    </location>
    <ligand>
        <name>FAD</name>
        <dbReference type="ChEBI" id="CHEBI:57692"/>
    </ligand>
</feature>
<feature type="binding site" evidence="3">
    <location>
        <position position="326"/>
    </location>
    <ligand>
        <name>FAD</name>
        <dbReference type="ChEBI" id="CHEBI:57692"/>
    </ligand>
</feature>
<feature type="binding site" evidence="3">
    <location>
        <position position="327"/>
    </location>
    <ligand>
        <name>FAD</name>
        <dbReference type="ChEBI" id="CHEBI:57692"/>
    </ligand>
</feature>
<feature type="binding site" evidence="3">
    <location>
        <position position="328"/>
    </location>
    <ligand>
        <name>FAD</name>
        <dbReference type="ChEBI" id="CHEBI:57692"/>
    </ligand>
</feature>